<proteinExistence type="inferred from homology"/>
<dbReference type="EC" id="4.1.1.31" evidence="1"/>
<dbReference type="EMBL" id="AE009950">
    <property type="protein sequence ID" value="AAL82099.1"/>
    <property type="molecule type" value="Genomic_DNA"/>
</dbReference>
<dbReference type="RefSeq" id="WP_011013117.1">
    <property type="nucleotide sequence ID" value="NZ_CP023154.1"/>
</dbReference>
<dbReference type="SMR" id="Q8TZL5"/>
<dbReference type="STRING" id="186497.PF1975"/>
<dbReference type="PaxDb" id="186497-PF1975"/>
<dbReference type="GeneID" id="41713797"/>
<dbReference type="KEGG" id="pfu:PF1975"/>
<dbReference type="PATRIC" id="fig|186497.12.peg.2048"/>
<dbReference type="eggNOG" id="arCOG04435">
    <property type="taxonomic scope" value="Archaea"/>
</dbReference>
<dbReference type="HOGENOM" id="CLU_517433_0_0_2"/>
<dbReference type="OrthoDB" id="85849at2157"/>
<dbReference type="PhylomeDB" id="Q8TZL5"/>
<dbReference type="BRENDA" id="4.1.1.31">
    <property type="organism ID" value="5243"/>
</dbReference>
<dbReference type="Proteomes" id="UP000001013">
    <property type="component" value="Chromosome"/>
</dbReference>
<dbReference type="GO" id="GO:0000287">
    <property type="term" value="F:magnesium ion binding"/>
    <property type="evidence" value="ECO:0007669"/>
    <property type="project" value="UniProtKB-UniRule"/>
</dbReference>
<dbReference type="GO" id="GO:0008964">
    <property type="term" value="F:phosphoenolpyruvate carboxylase activity"/>
    <property type="evidence" value="ECO:0007669"/>
    <property type="project" value="UniProtKB-UniRule"/>
</dbReference>
<dbReference type="GO" id="GO:0015977">
    <property type="term" value="P:carbon fixation"/>
    <property type="evidence" value="ECO:0007669"/>
    <property type="project" value="UniProtKB-UniRule"/>
</dbReference>
<dbReference type="GO" id="GO:0006107">
    <property type="term" value="P:oxaloacetate metabolic process"/>
    <property type="evidence" value="ECO:0007669"/>
    <property type="project" value="UniProtKB-UniRule"/>
</dbReference>
<dbReference type="GO" id="GO:0006099">
    <property type="term" value="P:tricarboxylic acid cycle"/>
    <property type="evidence" value="ECO:0007669"/>
    <property type="project" value="InterPro"/>
</dbReference>
<dbReference type="HAMAP" id="MF_01904">
    <property type="entry name" value="PEPcase_type2"/>
    <property type="match status" value="1"/>
</dbReference>
<dbReference type="InterPro" id="IPR007566">
    <property type="entry name" value="PEP_COase_arc-type"/>
</dbReference>
<dbReference type="InterPro" id="IPR015813">
    <property type="entry name" value="Pyrv/PenolPyrv_kinase-like_dom"/>
</dbReference>
<dbReference type="NCBIfam" id="TIGR02751">
    <property type="entry name" value="PEPCase_arch"/>
    <property type="match status" value="1"/>
</dbReference>
<dbReference type="Pfam" id="PF14010">
    <property type="entry name" value="PEPcase_2"/>
    <property type="match status" value="1"/>
</dbReference>
<dbReference type="PIRSF" id="PIRSF006677">
    <property type="entry name" value="UCP006677"/>
    <property type="match status" value="1"/>
</dbReference>
<dbReference type="SUPFAM" id="SSF51621">
    <property type="entry name" value="Phosphoenolpyruvate/pyruvate domain"/>
    <property type="match status" value="1"/>
</dbReference>
<feature type="chain" id="PRO_0000309612" description="Phosphoenolpyruvate carboxylase">
    <location>
        <begin position="1"/>
        <end position="472"/>
    </location>
</feature>
<gene>
    <name evidence="1" type="primary">ppcA</name>
    <name type="ordered locus">PF1975</name>
</gene>
<reference key="1">
    <citation type="journal article" date="1999" name="Genetics">
        <title>Divergence of the hyperthermophilic archaea Pyrococcus furiosus and P. horikoshii inferred from complete genomic sequences.</title>
        <authorList>
            <person name="Maeder D.L."/>
            <person name="Weiss R.B."/>
            <person name="Dunn D.M."/>
            <person name="Cherry J.L."/>
            <person name="Gonzalez J.M."/>
            <person name="DiRuggiero J."/>
            <person name="Robb F.T."/>
        </authorList>
    </citation>
    <scope>NUCLEOTIDE SEQUENCE [LARGE SCALE GENOMIC DNA]</scope>
    <source>
        <strain>ATCC 43587 / DSM 3638 / JCM 8422 / Vc1</strain>
    </source>
</reference>
<evidence type="ECO:0000255" key="1">
    <source>
        <dbReference type="HAMAP-Rule" id="MF_01904"/>
    </source>
</evidence>
<organism>
    <name type="scientific">Pyrococcus furiosus (strain ATCC 43587 / DSM 3638 / JCM 8422 / Vc1)</name>
    <dbReference type="NCBI Taxonomy" id="186497"/>
    <lineage>
        <taxon>Archaea</taxon>
        <taxon>Methanobacteriati</taxon>
        <taxon>Methanobacteriota</taxon>
        <taxon>Thermococci</taxon>
        <taxon>Thermococcales</taxon>
        <taxon>Thermococcaceae</taxon>
        <taxon>Pyrococcus</taxon>
    </lineage>
</organism>
<name>CAPPA_PYRFU</name>
<accession>Q8TZL5</accession>
<protein>
    <recommendedName>
        <fullName evidence="1">Phosphoenolpyruvate carboxylase</fullName>
        <shortName evidence="1">PEPC</shortName>
        <shortName evidence="1">PEPCase</shortName>
        <ecNumber evidence="1">4.1.1.31</ecNumber>
    </recommendedName>
</protein>
<comment type="function">
    <text evidence="1">Catalyzes the irreversible beta-carboxylation of phosphoenolpyruvate (PEP) to form oxaloacetate (OAA), a four-carbon dicarboxylic acid source for the tricarboxylic acid cycle.</text>
</comment>
<comment type="catalytic activity">
    <reaction evidence="1">
        <text>oxaloacetate + phosphate = phosphoenolpyruvate + hydrogencarbonate</text>
        <dbReference type="Rhea" id="RHEA:28370"/>
        <dbReference type="ChEBI" id="CHEBI:16452"/>
        <dbReference type="ChEBI" id="CHEBI:17544"/>
        <dbReference type="ChEBI" id="CHEBI:43474"/>
        <dbReference type="ChEBI" id="CHEBI:58702"/>
        <dbReference type="EC" id="4.1.1.31"/>
    </reaction>
</comment>
<comment type="cofactor">
    <cofactor evidence="1">
        <name>Mg(2+)</name>
        <dbReference type="ChEBI" id="CHEBI:18420"/>
    </cofactor>
</comment>
<comment type="subunit">
    <text evidence="1">Homotetramer.</text>
</comment>
<comment type="similarity">
    <text evidence="1">Belongs to the PEPCase type 2 family.</text>
</comment>
<sequence length="472" mass="54315">MIPRIMSTQHPDNYSIPFFASSPILEGEDEITEAFYAFSVLGADEQMWDFEGKEVDEFVVKKLLERYPTFFKNNILGKDIRLTPRVPNPSVEKEEAKLLLETLQGIARSADYARIFYGDNIAPIFEVILPMTTSVEEIERVYWLYKKAVVWISREKIYDITVREWIGDFFPEKINVIPLFETKSALIKAAKITEAYILNRKNDIEYQRVFFARSDPAMNYGLITAVTYVKRALYEVLKVEEELSIPIYPIIGVGGPPLRGGMRPDNVDAVVKEYPSVQTFTIQSSFKYDYPTKDVVKAVEKIKSTKRKLPIPVEIPPFLVNYEAEYQKQIRILAPYINSVAKRIPRRRKRKLHIGLFGYSRNVNGITLPRAITFTAALYSIGIPPELLALNSLTDSQLETISEYYINVYEDLEFAMRFFSPKVAEKVGLKELAERVKEFKPEQIPEYIEEAEIVFKGEGDVMKLAQLRGFLG</sequence>
<keyword id="KW-0120">Carbon dioxide fixation</keyword>
<keyword id="KW-0456">Lyase</keyword>
<keyword id="KW-0460">Magnesium</keyword>
<keyword id="KW-1185">Reference proteome</keyword>